<feature type="chain" id="PRO_1000095807" description="Tryptophan synthase beta chain">
    <location>
        <begin position="1"/>
        <end position="406"/>
    </location>
</feature>
<feature type="modified residue" description="N6-(pyridoxal phosphate)lysine" evidence="1">
    <location>
        <position position="99"/>
    </location>
</feature>
<dbReference type="EC" id="4.2.1.20" evidence="1"/>
<dbReference type="EMBL" id="CP001191">
    <property type="protein sequence ID" value="ACI57216.1"/>
    <property type="molecule type" value="Genomic_DNA"/>
</dbReference>
<dbReference type="RefSeq" id="WP_003589509.1">
    <property type="nucleotide sequence ID" value="NC_011369.1"/>
</dbReference>
<dbReference type="SMR" id="B5ZV70"/>
<dbReference type="STRING" id="395492.Rleg2_3954"/>
<dbReference type="KEGG" id="rlt:Rleg2_3954"/>
<dbReference type="eggNOG" id="COG0133">
    <property type="taxonomic scope" value="Bacteria"/>
</dbReference>
<dbReference type="HOGENOM" id="CLU_016734_3_1_5"/>
<dbReference type="UniPathway" id="UPA00035">
    <property type="reaction ID" value="UER00044"/>
</dbReference>
<dbReference type="Proteomes" id="UP000008330">
    <property type="component" value="Chromosome"/>
</dbReference>
<dbReference type="GO" id="GO:0005737">
    <property type="term" value="C:cytoplasm"/>
    <property type="evidence" value="ECO:0007669"/>
    <property type="project" value="TreeGrafter"/>
</dbReference>
<dbReference type="GO" id="GO:0004834">
    <property type="term" value="F:tryptophan synthase activity"/>
    <property type="evidence" value="ECO:0007669"/>
    <property type="project" value="UniProtKB-UniRule"/>
</dbReference>
<dbReference type="CDD" id="cd06446">
    <property type="entry name" value="Trp-synth_B"/>
    <property type="match status" value="1"/>
</dbReference>
<dbReference type="FunFam" id="3.40.50.1100:FF:000001">
    <property type="entry name" value="Tryptophan synthase beta chain"/>
    <property type="match status" value="1"/>
</dbReference>
<dbReference type="FunFam" id="3.40.50.1100:FF:000004">
    <property type="entry name" value="Tryptophan synthase beta chain"/>
    <property type="match status" value="1"/>
</dbReference>
<dbReference type="Gene3D" id="3.40.50.1100">
    <property type="match status" value="2"/>
</dbReference>
<dbReference type="HAMAP" id="MF_00133">
    <property type="entry name" value="Trp_synth_beta"/>
    <property type="match status" value="1"/>
</dbReference>
<dbReference type="InterPro" id="IPR006653">
    <property type="entry name" value="Trp_synth_b_CS"/>
</dbReference>
<dbReference type="InterPro" id="IPR006654">
    <property type="entry name" value="Trp_synth_beta"/>
</dbReference>
<dbReference type="InterPro" id="IPR023026">
    <property type="entry name" value="Trp_synth_beta/beta-like"/>
</dbReference>
<dbReference type="InterPro" id="IPR001926">
    <property type="entry name" value="TrpB-like_PALP"/>
</dbReference>
<dbReference type="InterPro" id="IPR036052">
    <property type="entry name" value="TrpB-like_PALP_sf"/>
</dbReference>
<dbReference type="NCBIfam" id="TIGR00263">
    <property type="entry name" value="trpB"/>
    <property type="match status" value="1"/>
</dbReference>
<dbReference type="PANTHER" id="PTHR48077:SF3">
    <property type="entry name" value="TRYPTOPHAN SYNTHASE"/>
    <property type="match status" value="1"/>
</dbReference>
<dbReference type="PANTHER" id="PTHR48077">
    <property type="entry name" value="TRYPTOPHAN SYNTHASE-RELATED"/>
    <property type="match status" value="1"/>
</dbReference>
<dbReference type="Pfam" id="PF00291">
    <property type="entry name" value="PALP"/>
    <property type="match status" value="1"/>
</dbReference>
<dbReference type="PIRSF" id="PIRSF001413">
    <property type="entry name" value="Trp_syn_beta"/>
    <property type="match status" value="1"/>
</dbReference>
<dbReference type="SUPFAM" id="SSF53686">
    <property type="entry name" value="Tryptophan synthase beta subunit-like PLP-dependent enzymes"/>
    <property type="match status" value="1"/>
</dbReference>
<dbReference type="PROSITE" id="PS00168">
    <property type="entry name" value="TRP_SYNTHASE_BETA"/>
    <property type="match status" value="1"/>
</dbReference>
<proteinExistence type="inferred from homology"/>
<accession>B5ZV70</accession>
<name>TRPB_RHILW</name>
<protein>
    <recommendedName>
        <fullName evidence="1">Tryptophan synthase beta chain</fullName>
        <ecNumber evidence="1">4.2.1.20</ecNumber>
    </recommendedName>
</protein>
<comment type="function">
    <text evidence="1">The beta subunit is responsible for the synthesis of L-tryptophan from indole and L-serine.</text>
</comment>
<comment type="catalytic activity">
    <reaction evidence="1">
        <text>(1S,2R)-1-C-(indol-3-yl)glycerol 3-phosphate + L-serine = D-glyceraldehyde 3-phosphate + L-tryptophan + H2O</text>
        <dbReference type="Rhea" id="RHEA:10532"/>
        <dbReference type="ChEBI" id="CHEBI:15377"/>
        <dbReference type="ChEBI" id="CHEBI:33384"/>
        <dbReference type="ChEBI" id="CHEBI:57912"/>
        <dbReference type="ChEBI" id="CHEBI:58866"/>
        <dbReference type="ChEBI" id="CHEBI:59776"/>
        <dbReference type="EC" id="4.2.1.20"/>
    </reaction>
</comment>
<comment type="cofactor">
    <cofactor evidence="1">
        <name>pyridoxal 5'-phosphate</name>
        <dbReference type="ChEBI" id="CHEBI:597326"/>
    </cofactor>
</comment>
<comment type="pathway">
    <text evidence="1">Amino-acid biosynthesis; L-tryptophan biosynthesis; L-tryptophan from chorismate: step 5/5.</text>
</comment>
<comment type="subunit">
    <text evidence="1">Tetramer of two alpha and two beta chains.</text>
</comment>
<comment type="similarity">
    <text evidence="1">Belongs to the TrpB family.</text>
</comment>
<reference key="1">
    <citation type="journal article" date="2010" name="Stand. Genomic Sci.">
        <title>Complete genome sequence of Rhizobium leguminosarum bv trifolii strain WSM2304, an effective microsymbiont of the South American clover Trifolium polymorphum.</title>
        <authorList>
            <person name="Reeve W."/>
            <person name="O'Hara G."/>
            <person name="Chain P."/>
            <person name="Ardley J."/>
            <person name="Brau L."/>
            <person name="Nandesena K."/>
            <person name="Tiwari R."/>
            <person name="Malfatti S."/>
            <person name="Kiss H."/>
            <person name="Lapidus A."/>
            <person name="Copeland A."/>
            <person name="Nolan M."/>
            <person name="Land M."/>
            <person name="Ivanova N."/>
            <person name="Mavromatis K."/>
            <person name="Markowitz V."/>
            <person name="Kyrpides N."/>
            <person name="Melino V."/>
            <person name="Denton M."/>
            <person name="Yates R."/>
            <person name="Howieson J."/>
        </authorList>
    </citation>
    <scope>NUCLEOTIDE SEQUENCE [LARGE SCALE GENOMIC DNA]</scope>
    <source>
        <strain>WSM2304</strain>
    </source>
</reference>
<sequence>MNETPKPNSFRSGPDEDGRFGIYGGRFVAETLMPLILDLQDEWNKAKNDPAFQAELKHLGAHYIGRPSPLYFAERLTAELGGAKIYFKREELNHTGSHKINNCIGQILLAKRMGKTRIIAETGAGQHGVASATVAARFGLPCVVYMGATDVERQAPNVFRMKLLGAEVKPVTAGSGTLKDAMNEALRDWVTNVEDTYYLIGTAAGPHPYPEMVRDFQSVIGTEAKEQMLAAEGRLPDLVIAAVGGGSNAIGIFHPFLDDPTVKIVGVEAGGKGLQGDEHCASITAGSPGVLHGNRTYLLQDGDGQIKEGHSISAGLDYPGIGPEHSWLNDTGRVDYVPIMDHEALEAFQTLTRLEGIIPALEPSHAIAEVIKRAPKMGKDEIILMNLSGRGDKDIFTVGKILGMGL</sequence>
<keyword id="KW-0028">Amino-acid biosynthesis</keyword>
<keyword id="KW-0057">Aromatic amino acid biosynthesis</keyword>
<keyword id="KW-0456">Lyase</keyword>
<keyword id="KW-0663">Pyridoxal phosphate</keyword>
<keyword id="KW-1185">Reference proteome</keyword>
<keyword id="KW-0822">Tryptophan biosynthesis</keyword>
<evidence type="ECO:0000255" key="1">
    <source>
        <dbReference type="HAMAP-Rule" id="MF_00133"/>
    </source>
</evidence>
<organism>
    <name type="scientific">Rhizobium leguminosarum bv. trifolii (strain WSM2304)</name>
    <dbReference type="NCBI Taxonomy" id="395492"/>
    <lineage>
        <taxon>Bacteria</taxon>
        <taxon>Pseudomonadati</taxon>
        <taxon>Pseudomonadota</taxon>
        <taxon>Alphaproteobacteria</taxon>
        <taxon>Hyphomicrobiales</taxon>
        <taxon>Rhizobiaceae</taxon>
        <taxon>Rhizobium/Agrobacterium group</taxon>
        <taxon>Rhizobium</taxon>
    </lineage>
</organism>
<gene>
    <name evidence="1" type="primary">trpB</name>
    <name type="ordered locus">Rleg2_3954</name>
</gene>